<feature type="chain" id="PRO_1000124811" description="Pantothenate kinase">
    <location>
        <begin position="1"/>
        <end position="306"/>
    </location>
</feature>
<feature type="binding site" evidence="1">
    <location>
        <begin position="91"/>
        <end position="98"/>
    </location>
    <ligand>
        <name>ATP</name>
        <dbReference type="ChEBI" id="CHEBI:30616"/>
    </ligand>
</feature>
<comment type="catalytic activity">
    <reaction evidence="1">
        <text>(R)-pantothenate + ATP = (R)-4'-phosphopantothenate + ADP + H(+)</text>
        <dbReference type="Rhea" id="RHEA:16373"/>
        <dbReference type="ChEBI" id="CHEBI:10986"/>
        <dbReference type="ChEBI" id="CHEBI:15378"/>
        <dbReference type="ChEBI" id="CHEBI:29032"/>
        <dbReference type="ChEBI" id="CHEBI:30616"/>
        <dbReference type="ChEBI" id="CHEBI:456216"/>
        <dbReference type="EC" id="2.7.1.33"/>
    </reaction>
</comment>
<comment type="pathway">
    <text evidence="1">Cofactor biosynthesis; coenzyme A biosynthesis; CoA from (R)-pantothenate: step 1/5.</text>
</comment>
<comment type="subcellular location">
    <subcellularLocation>
        <location evidence="1">Cytoplasm</location>
    </subcellularLocation>
</comment>
<comment type="similarity">
    <text evidence="1">Belongs to the prokaryotic pantothenate kinase family.</text>
</comment>
<sequence>MTNEFLHFEKISRQTWQSLHRKTTPPLTEEELESIKSFNDQISLQDVTDIYLPLAHLIQIYKRTKEDLAFSKGIFLQRESKSQPFIIGVSGSVAVGKSTTSRLLQILLSRTFTDATVELVTTDGFLYPNQTLIEQGILNRKGFPESYDMEALLNFLDRIKNGQDVDIPVYSHEVYDIVPEKKQSVKAADFVIVEGINVFQNPQNDRLYITDFFDFSIYVDAGVDDIESWYLDRFLKMLSLAQNDPDSYYYRFTQMPIGEVESFAHQVWISINLTNLQNYIEPTRNRAEVILHKSKNHEIDEIYLKK</sequence>
<dbReference type="EC" id="2.7.1.33" evidence="1"/>
<dbReference type="EMBL" id="CP000919">
    <property type="protein sequence ID" value="ACO18702.1"/>
    <property type="molecule type" value="Genomic_DNA"/>
</dbReference>
<dbReference type="RefSeq" id="WP_000180492.1">
    <property type="nucleotide sequence ID" value="NC_012466.1"/>
</dbReference>
<dbReference type="SMR" id="C1CDI6"/>
<dbReference type="KEGG" id="sjj:SPJ_0776"/>
<dbReference type="HOGENOM" id="CLU_053818_1_1_9"/>
<dbReference type="UniPathway" id="UPA00241">
    <property type="reaction ID" value="UER00352"/>
</dbReference>
<dbReference type="Proteomes" id="UP000002206">
    <property type="component" value="Chromosome"/>
</dbReference>
<dbReference type="GO" id="GO:0005737">
    <property type="term" value="C:cytoplasm"/>
    <property type="evidence" value="ECO:0007669"/>
    <property type="project" value="UniProtKB-SubCell"/>
</dbReference>
<dbReference type="GO" id="GO:0005524">
    <property type="term" value="F:ATP binding"/>
    <property type="evidence" value="ECO:0007669"/>
    <property type="project" value="UniProtKB-UniRule"/>
</dbReference>
<dbReference type="GO" id="GO:0004594">
    <property type="term" value="F:pantothenate kinase activity"/>
    <property type="evidence" value="ECO:0007669"/>
    <property type="project" value="UniProtKB-UniRule"/>
</dbReference>
<dbReference type="GO" id="GO:0015937">
    <property type="term" value="P:coenzyme A biosynthetic process"/>
    <property type="evidence" value="ECO:0007669"/>
    <property type="project" value="UniProtKB-UniRule"/>
</dbReference>
<dbReference type="CDD" id="cd02025">
    <property type="entry name" value="PanK"/>
    <property type="match status" value="1"/>
</dbReference>
<dbReference type="FunFam" id="3.40.50.300:FF:001646">
    <property type="entry name" value="Pantothenate kinase"/>
    <property type="match status" value="1"/>
</dbReference>
<dbReference type="Gene3D" id="3.40.50.300">
    <property type="entry name" value="P-loop containing nucleotide triphosphate hydrolases"/>
    <property type="match status" value="1"/>
</dbReference>
<dbReference type="HAMAP" id="MF_00215">
    <property type="entry name" value="Pantothen_kinase_1"/>
    <property type="match status" value="1"/>
</dbReference>
<dbReference type="InterPro" id="IPR027417">
    <property type="entry name" value="P-loop_NTPase"/>
</dbReference>
<dbReference type="InterPro" id="IPR004566">
    <property type="entry name" value="PanK"/>
</dbReference>
<dbReference type="InterPro" id="IPR006083">
    <property type="entry name" value="PRK/URK"/>
</dbReference>
<dbReference type="NCBIfam" id="TIGR00554">
    <property type="entry name" value="panK_bact"/>
    <property type="match status" value="1"/>
</dbReference>
<dbReference type="PANTHER" id="PTHR10285">
    <property type="entry name" value="URIDINE KINASE"/>
    <property type="match status" value="1"/>
</dbReference>
<dbReference type="Pfam" id="PF00485">
    <property type="entry name" value="PRK"/>
    <property type="match status" value="1"/>
</dbReference>
<dbReference type="PIRSF" id="PIRSF000545">
    <property type="entry name" value="Pantothenate_kin"/>
    <property type="match status" value="1"/>
</dbReference>
<dbReference type="SUPFAM" id="SSF52540">
    <property type="entry name" value="P-loop containing nucleoside triphosphate hydrolases"/>
    <property type="match status" value="1"/>
</dbReference>
<keyword id="KW-0067">ATP-binding</keyword>
<keyword id="KW-0173">Coenzyme A biosynthesis</keyword>
<keyword id="KW-0963">Cytoplasm</keyword>
<keyword id="KW-0418">Kinase</keyword>
<keyword id="KW-0547">Nucleotide-binding</keyword>
<keyword id="KW-0808">Transferase</keyword>
<proteinExistence type="inferred from homology"/>
<reference key="1">
    <citation type="journal article" date="2010" name="Genome Biol.">
        <title>Structure and dynamics of the pan-genome of Streptococcus pneumoniae and closely related species.</title>
        <authorList>
            <person name="Donati C."/>
            <person name="Hiller N.L."/>
            <person name="Tettelin H."/>
            <person name="Muzzi A."/>
            <person name="Croucher N.J."/>
            <person name="Angiuoli S.V."/>
            <person name="Oggioni M."/>
            <person name="Dunning Hotopp J.C."/>
            <person name="Hu F.Z."/>
            <person name="Riley D.R."/>
            <person name="Covacci A."/>
            <person name="Mitchell T.J."/>
            <person name="Bentley S.D."/>
            <person name="Kilian M."/>
            <person name="Ehrlich G.D."/>
            <person name="Rappuoli R."/>
            <person name="Moxon E.R."/>
            <person name="Masignani V."/>
        </authorList>
    </citation>
    <scope>NUCLEOTIDE SEQUENCE [LARGE SCALE GENOMIC DNA]</scope>
    <source>
        <strain>JJA</strain>
    </source>
</reference>
<organism>
    <name type="scientific">Streptococcus pneumoniae (strain JJA)</name>
    <dbReference type="NCBI Taxonomy" id="488222"/>
    <lineage>
        <taxon>Bacteria</taxon>
        <taxon>Bacillati</taxon>
        <taxon>Bacillota</taxon>
        <taxon>Bacilli</taxon>
        <taxon>Lactobacillales</taxon>
        <taxon>Streptococcaceae</taxon>
        <taxon>Streptococcus</taxon>
    </lineage>
</organism>
<evidence type="ECO:0000255" key="1">
    <source>
        <dbReference type="HAMAP-Rule" id="MF_00215"/>
    </source>
</evidence>
<accession>C1CDI6</accession>
<protein>
    <recommendedName>
        <fullName evidence="1">Pantothenate kinase</fullName>
        <ecNumber evidence="1">2.7.1.33</ecNumber>
    </recommendedName>
    <alternativeName>
        <fullName evidence="1">Pantothenic acid kinase</fullName>
    </alternativeName>
</protein>
<name>COAA_STRZJ</name>
<gene>
    <name evidence="1" type="primary">coaA</name>
    <name type="ordered locus">SPJ_0776</name>
</gene>